<sequence>MKIIIDGDGCAGRDIIEEVGKKHSVKILIYCTINHMINSDYSEVRMVDGGFQSVDMYVANNTEENDIVITQDYGVAAMALGKGALAISPRGYIYDNDNIDRLLFERHLSQKNRRAGGKSKGNHKRNKEDDDRLYYNLEVLIEKVKAILN</sequence>
<gene>
    <name type="ordered locus">CPE2266</name>
</gene>
<accession>Q8XI55</accession>
<reference key="1">
    <citation type="journal article" date="2002" name="Proc. Natl. Acad. Sci. U.S.A.">
        <title>Complete genome sequence of Clostridium perfringens, an anaerobic flesh-eater.</title>
        <authorList>
            <person name="Shimizu T."/>
            <person name="Ohtani K."/>
            <person name="Hirakawa H."/>
            <person name="Ohshima K."/>
            <person name="Yamashita A."/>
            <person name="Shiba T."/>
            <person name="Ogasawara N."/>
            <person name="Hattori M."/>
            <person name="Kuhara S."/>
            <person name="Hayashi H."/>
        </authorList>
    </citation>
    <scope>NUCLEOTIDE SEQUENCE [LARGE SCALE GENOMIC DNA]</scope>
    <source>
        <strain>13 / Type A</strain>
    </source>
</reference>
<name>Y2266_CLOPE</name>
<comment type="similarity">
    <text evidence="1">Belongs to the UPF0178 family.</text>
</comment>
<feature type="chain" id="PRO_0000175974" description="UPF0178 protein CPE2266">
    <location>
        <begin position="1"/>
        <end position="149"/>
    </location>
</feature>
<evidence type="ECO:0000255" key="1">
    <source>
        <dbReference type="HAMAP-Rule" id="MF_00489"/>
    </source>
</evidence>
<dbReference type="EMBL" id="BA000016">
    <property type="protein sequence ID" value="BAB81972.1"/>
    <property type="molecule type" value="Genomic_DNA"/>
</dbReference>
<dbReference type="RefSeq" id="WP_003454468.1">
    <property type="nucleotide sequence ID" value="NC_003366.1"/>
</dbReference>
<dbReference type="STRING" id="195102.gene:10491574"/>
<dbReference type="KEGG" id="cpe:CPE2266"/>
<dbReference type="HOGENOM" id="CLU_106619_0_0_9"/>
<dbReference type="Proteomes" id="UP000000818">
    <property type="component" value="Chromosome"/>
</dbReference>
<dbReference type="HAMAP" id="MF_00489">
    <property type="entry name" value="UPF0178"/>
    <property type="match status" value="1"/>
</dbReference>
<dbReference type="InterPro" id="IPR003791">
    <property type="entry name" value="UPF0178"/>
</dbReference>
<dbReference type="NCBIfam" id="NF001095">
    <property type="entry name" value="PRK00124.1"/>
    <property type="match status" value="1"/>
</dbReference>
<dbReference type="PANTHER" id="PTHR35146">
    <property type="entry name" value="UPF0178 PROTEIN YAII"/>
    <property type="match status" value="1"/>
</dbReference>
<dbReference type="PANTHER" id="PTHR35146:SF1">
    <property type="entry name" value="UPF0178 PROTEIN YAII"/>
    <property type="match status" value="1"/>
</dbReference>
<dbReference type="Pfam" id="PF02639">
    <property type="entry name" value="DUF188"/>
    <property type="match status" value="1"/>
</dbReference>
<protein>
    <recommendedName>
        <fullName evidence="1">UPF0178 protein CPE2266</fullName>
    </recommendedName>
</protein>
<keyword id="KW-1185">Reference proteome</keyword>
<proteinExistence type="inferred from homology"/>
<organism>
    <name type="scientific">Clostridium perfringens (strain 13 / Type A)</name>
    <dbReference type="NCBI Taxonomy" id="195102"/>
    <lineage>
        <taxon>Bacteria</taxon>
        <taxon>Bacillati</taxon>
        <taxon>Bacillota</taxon>
        <taxon>Clostridia</taxon>
        <taxon>Eubacteriales</taxon>
        <taxon>Clostridiaceae</taxon>
        <taxon>Clostridium</taxon>
    </lineage>
</organism>